<comment type="function">
    <text>May be a regulatory protein for the LCT genes.</text>
</comment>
<comment type="induction">
    <text>By L-lactate; aerobically.</text>
</comment>
<evidence type="ECO:0000255" key="1">
    <source>
        <dbReference type="PROSITE-ProRule" id="PRU00307"/>
    </source>
</evidence>
<sequence>MIVLPRRLSDEVADRVRALIDEKNLEAGMKLPAERQLAMQLGVSRNSLREALAKLVSEGVLLSRRGGGTFIRWRHDTWSEQNIVQPLKTLMADDPDYSFDILEARYAIEASTAWHAAMRATPGDKEKIQLCFEATLSEDPDIASQADVRFHLAIAEASHNIVLLQTMRGFFDVLQSSVKHSRQRMYLVPPVFSQLTEQHQAVIDAIFAGDADGARKAMMAHLSFVHTTMKRFDEDQARHARITRLPGEHNEHSREKNA</sequence>
<keyword id="KW-0238">DNA-binding</keyword>
<keyword id="KW-1185">Reference proteome</keyword>
<keyword id="KW-0804">Transcription</keyword>
<keyword id="KW-0805">Transcription regulation</keyword>
<organism>
    <name type="scientific">Escherichia coli (strain K12)</name>
    <dbReference type="NCBI Taxonomy" id="83333"/>
    <lineage>
        <taxon>Bacteria</taxon>
        <taxon>Pseudomonadati</taxon>
        <taxon>Pseudomonadota</taxon>
        <taxon>Gammaproteobacteria</taxon>
        <taxon>Enterobacterales</taxon>
        <taxon>Enterobacteriaceae</taxon>
        <taxon>Escherichia</taxon>
    </lineage>
</organism>
<feature type="chain" id="PRO_0000050652" description="Putative L-lactate dehydrogenase operon regulatory protein">
    <location>
        <begin position="1"/>
        <end position="258"/>
    </location>
</feature>
<feature type="domain" description="HTH gntR-type" evidence="1">
    <location>
        <begin position="6"/>
        <end position="74"/>
    </location>
</feature>
<feature type="DNA-binding region" description="H-T-H motif" evidence="1">
    <location>
        <begin position="34"/>
        <end position="53"/>
    </location>
</feature>
<accession>P0ACL7</accession>
<accession>P33233</accession>
<accession>Q2M7R8</accession>
<dbReference type="EMBL" id="L13970">
    <property type="protein sequence ID" value="AAA03584.1"/>
    <property type="molecule type" value="Unassigned_DNA"/>
</dbReference>
<dbReference type="EMBL" id="U00039">
    <property type="protein sequence ID" value="AAB18581.1"/>
    <property type="molecule type" value="Genomic_DNA"/>
</dbReference>
<dbReference type="EMBL" id="U00096">
    <property type="protein sequence ID" value="AAC76628.1"/>
    <property type="molecule type" value="Genomic_DNA"/>
</dbReference>
<dbReference type="EMBL" id="AP009048">
    <property type="protein sequence ID" value="BAE77688.1"/>
    <property type="molecule type" value="Genomic_DNA"/>
</dbReference>
<dbReference type="PIR" id="B49904">
    <property type="entry name" value="B49904"/>
</dbReference>
<dbReference type="RefSeq" id="NP_418061.1">
    <property type="nucleotide sequence ID" value="NC_000913.3"/>
</dbReference>
<dbReference type="RefSeq" id="WP_000636500.1">
    <property type="nucleotide sequence ID" value="NZ_STEB01000024.1"/>
</dbReference>
<dbReference type="SMR" id="P0ACL7"/>
<dbReference type="BioGRID" id="4260906">
    <property type="interactions" value="115"/>
</dbReference>
<dbReference type="DIP" id="DIP-10110N"/>
<dbReference type="FunCoup" id="P0ACL7">
    <property type="interactions" value="77"/>
</dbReference>
<dbReference type="IntAct" id="P0ACL7">
    <property type="interactions" value="5"/>
</dbReference>
<dbReference type="STRING" id="511145.b3604"/>
<dbReference type="PaxDb" id="511145-b3604"/>
<dbReference type="EnsemblBacteria" id="AAC76628">
    <property type="protein sequence ID" value="AAC76628"/>
    <property type="gene ID" value="b3604"/>
</dbReference>
<dbReference type="GeneID" id="93778318"/>
<dbReference type="GeneID" id="948122"/>
<dbReference type="KEGG" id="ecj:JW3579"/>
<dbReference type="KEGG" id="eco:b3604"/>
<dbReference type="KEGG" id="ecoc:C3026_19545"/>
<dbReference type="PATRIC" id="fig|1411691.4.peg.3102"/>
<dbReference type="EchoBASE" id="EB1905"/>
<dbReference type="eggNOG" id="COG2186">
    <property type="taxonomic scope" value="Bacteria"/>
</dbReference>
<dbReference type="HOGENOM" id="CLU_017584_9_5_6"/>
<dbReference type="InParanoid" id="P0ACL7"/>
<dbReference type="OMA" id="SFVVDFH"/>
<dbReference type="OrthoDB" id="5450856at2"/>
<dbReference type="PhylomeDB" id="P0ACL7"/>
<dbReference type="BioCyc" id="EcoCyc:EG11962-MONOMER"/>
<dbReference type="PRO" id="PR:P0ACL7"/>
<dbReference type="Proteomes" id="UP000000625">
    <property type="component" value="Chromosome"/>
</dbReference>
<dbReference type="GO" id="GO:0000987">
    <property type="term" value="F:cis-regulatory region sequence-specific DNA binding"/>
    <property type="evidence" value="ECO:0000314"/>
    <property type="project" value="EcoCyc"/>
</dbReference>
<dbReference type="GO" id="GO:0001216">
    <property type="term" value="F:DNA-binding transcription activator activity"/>
    <property type="evidence" value="ECO:0000315"/>
    <property type="project" value="EcoCyc"/>
</dbReference>
<dbReference type="GO" id="GO:0001217">
    <property type="term" value="F:DNA-binding transcription repressor activity"/>
    <property type="evidence" value="ECO:0000315"/>
    <property type="project" value="EcoCyc"/>
</dbReference>
<dbReference type="GO" id="GO:0006974">
    <property type="term" value="P:DNA damage response"/>
    <property type="evidence" value="ECO:0000270"/>
    <property type="project" value="EcoliWiki"/>
</dbReference>
<dbReference type="GO" id="GO:2000143">
    <property type="term" value="P:negative regulation of DNA-templated transcription initiation"/>
    <property type="evidence" value="ECO:0000315"/>
    <property type="project" value="EcoCyc"/>
</dbReference>
<dbReference type="GO" id="GO:2000144">
    <property type="term" value="P:positive regulation of DNA-templated transcription initiation"/>
    <property type="evidence" value="ECO:0000315"/>
    <property type="project" value="EcoCyc"/>
</dbReference>
<dbReference type="GO" id="GO:0044010">
    <property type="term" value="P:single-species biofilm formation"/>
    <property type="evidence" value="ECO:0000315"/>
    <property type="project" value="EcoCyc"/>
</dbReference>
<dbReference type="CDD" id="cd07377">
    <property type="entry name" value="WHTH_GntR"/>
    <property type="match status" value="1"/>
</dbReference>
<dbReference type="FunFam" id="1.20.120.530:FF:000009">
    <property type="entry name" value="DNA-binding transcriptional repressor LldR"/>
    <property type="match status" value="1"/>
</dbReference>
<dbReference type="Gene3D" id="1.20.120.530">
    <property type="entry name" value="GntR ligand-binding domain-like"/>
    <property type="match status" value="1"/>
</dbReference>
<dbReference type="Gene3D" id="1.10.10.10">
    <property type="entry name" value="Winged helix-like DNA-binding domain superfamily/Winged helix DNA-binding domain"/>
    <property type="match status" value="1"/>
</dbReference>
<dbReference type="InterPro" id="IPR011711">
    <property type="entry name" value="GntR_C"/>
</dbReference>
<dbReference type="InterPro" id="IPR008920">
    <property type="entry name" value="TF_FadR/GntR_C"/>
</dbReference>
<dbReference type="InterPro" id="IPR000524">
    <property type="entry name" value="Tscrpt_reg_HTH_GntR"/>
</dbReference>
<dbReference type="InterPro" id="IPR036388">
    <property type="entry name" value="WH-like_DNA-bd_sf"/>
</dbReference>
<dbReference type="InterPro" id="IPR036390">
    <property type="entry name" value="WH_DNA-bd_sf"/>
</dbReference>
<dbReference type="NCBIfam" id="NF007741">
    <property type="entry name" value="PRK10421.1"/>
    <property type="match status" value="1"/>
</dbReference>
<dbReference type="PANTHER" id="PTHR43537:SF18">
    <property type="entry name" value="L-LACTATE DEHYDROGENASE OPERON REGULATORY PROTEIN-RELATED"/>
    <property type="match status" value="1"/>
</dbReference>
<dbReference type="PANTHER" id="PTHR43537">
    <property type="entry name" value="TRANSCRIPTIONAL REGULATOR, GNTR FAMILY"/>
    <property type="match status" value="1"/>
</dbReference>
<dbReference type="Pfam" id="PF07729">
    <property type="entry name" value="FCD"/>
    <property type="match status" value="1"/>
</dbReference>
<dbReference type="Pfam" id="PF00392">
    <property type="entry name" value="GntR"/>
    <property type="match status" value="1"/>
</dbReference>
<dbReference type="PRINTS" id="PR00035">
    <property type="entry name" value="HTHGNTR"/>
</dbReference>
<dbReference type="SMART" id="SM00895">
    <property type="entry name" value="FCD"/>
    <property type="match status" value="1"/>
</dbReference>
<dbReference type="SMART" id="SM00345">
    <property type="entry name" value="HTH_GNTR"/>
    <property type="match status" value="1"/>
</dbReference>
<dbReference type="SUPFAM" id="SSF48008">
    <property type="entry name" value="GntR ligand-binding domain-like"/>
    <property type="match status" value="1"/>
</dbReference>
<dbReference type="SUPFAM" id="SSF46785">
    <property type="entry name" value="Winged helix' DNA-binding domain"/>
    <property type="match status" value="1"/>
</dbReference>
<dbReference type="PROSITE" id="PS50949">
    <property type="entry name" value="HTH_GNTR"/>
    <property type="match status" value="1"/>
</dbReference>
<reference key="1">
    <citation type="journal article" date="1993" name="J. Bacteriol.">
        <title>Three overlapping lct genes involved in L-lactate utilization by Escherichia coli.</title>
        <authorList>
            <person name="Dong J.M."/>
            <person name="Taylor J.S."/>
            <person name="Latour D.J."/>
            <person name="Iuchi S."/>
            <person name="Lin E.C.C."/>
        </authorList>
    </citation>
    <scope>NUCLEOTIDE SEQUENCE [GENOMIC DNA]</scope>
    <source>
        <strain>K12</strain>
    </source>
</reference>
<reference key="2">
    <citation type="journal article" date="1994" name="Nucleic Acids Res.">
        <title>Analysis of the Escherichia coli genome. V. DNA sequence of the region from 76.0 to 81.5 minutes.</title>
        <authorList>
            <person name="Sofia H.J."/>
            <person name="Burland V."/>
            <person name="Daniels D.L."/>
            <person name="Plunkett G. III"/>
            <person name="Blattner F.R."/>
        </authorList>
    </citation>
    <scope>NUCLEOTIDE SEQUENCE [LARGE SCALE GENOMIC DNA]</scope>
    <source>
        <strain>K12 / MG1655 / ATCC 47076</strain>
    </source>
</reference>
<reference key="3">
    <citation type="journal article" date="1997" name="Science">
        <title>The complete genome sequence of Escherichia coli K-12.</title>
        <authorList>
            <person name="Blattner F.R."/>
            <person name="Plunkett G. III"/>
            <person name="Bloch C.A."/>
            <person name="Perna N.T."/>
            <person name="Burland V."/>
            <person name="Riley M."/>
            <person name="Collado-Vides J."/>
            <person name="Glasner J.D."/>
            <person name="Rode C.K."/>
            <person name="Mayhew G.F."/>
            <person name="Gregor J."/>
            <person name="Davis N.W."/>
            <person name="Kirkpatrick H.A."/>
            <person name="Goeden M.A."/>
            <person name="Rose D.J."/>
            <person name="Mau B."/>
            <person name="Shao Y."/>
        </authorList>
    </citation>
    <scope>NUCLEOTIDE SEQUENCE [LARGE SCALE GENOMIC DNA]</scope>
    <source>
        <strain>K12 / MG1655 / ATCC 47076</strain>
    </source>
</reference>
<reference key="4">
    <citation type="journal article" date="2006" name="Mol. Syst. Biol.">
        <title>Highly accurate genome sequences of Escherichia coli K-12 strains MG1655 and W3110.</title>
        <authorList>
            <person name="Hayashi K."/>
            <person name="Morooka N."/>
            <person name="Yamamoto Y."/>
            <person name="Fujita K."/>
            <person name="Isono K."/>
            <person name="Choi S."/>
            <person name="Ohtsubo E."/>
            <person name="Baba T."/>
            <person name="Wanner B.L."/>
            <person name="Mori H."/>
            <person name="Horiuchi T."/>
        </authorList>
    </citation>
    <scope>NUCLEOTIDE SEQUENCE [LARGE SCALE GENOMIC DNA]</scope>
    <source>
        <strain>K12 / W3110 / ATCC 27325 / DSM 5911</strain>
    </source>
</reference>
<name>LLDR_ECOLI</name>
<proteinExistence type="evidence at transcript level"/>
<gene>
    <name type="primary">lldR</name>
    <name type="synonym">lctR</name>
    <name type="ordered locus">b3604</name>
    <name type="ordered locus">JW3579</name>
</gene>
<protein>
    <recommendedName>
        <fullName>Putative L-lactate dehydrogenase operon regulatory protein</fullName>
    </recommendedName>
</protein>